<comment type="function">
    <text evidence="1">Catalyzes the thiamine diphosphate-dependent decarboxylation of 2-oxoglutarate and the subsequent addition of the resulting succinic semialdehyde-thiamine pyrophosphate anion to isochorismate to yield 2-succinyl-5-enolpyruvyl-6-hydroxy-3-cyclohexene-1-carboxylate (SEPHCHC).</text>
</comment>
<comment type="catalytic activity">
    <reaction evidence="1">
        <text>isochorismate + 2-oxoglutarate + H(+) = 5-enolpyruvoyl-6-hydroxy-2-succinyl-cyclohex-3-ene-1-carboxylate + CO2</text>
        <dbReference type="Rhea" id="RHEA:25593"/>
        <dbReference type="ChEBI" id="CHEBI:15378"/>
        <dbReference type="ChEBI" id="CHEBI:16526"/>
        <dbReference type="ChEBI" id="CHEBI:16810"/>
        <dbReference type="ChEBI" id="CHEBI:29780"/>
        <dbReference type="ChEBI" id="CHEBI:58818"/>
        <dbReference type="EC" id="2.2.1.9"/>
    </reaction>
</comment>
<comment type="cofactor">
    <cofactor evidence="1">
        <name>Mg(2+)</name>
        <dbReference type="ChEBI" id="CHEBI:18420"/>
    </cofactor>
    <cofactor evidence="1">
        <name>Mn(2+)</name>
        <dbReference type="ChEBI" id="CHEBI:29035"/>
    </cofactor>
</comment>
<comment type="cofactor">
    <cofactor evidence="1">
        <name>thiamine diphosphate</name>
        <dbReference type="ChEBI" id="CHEBI:58937"/>
    </cofactor>
    <text evidence="1">Binds 1 thiamine pyrophosphate per subunit.</text>
</comment>
<comment type="pathway">
    <text evidence="1">Quinol/quinone metabolism; 1,4-dihydroxy-2-naphthoate biosynthesis; 1,4-dihydroxy-2-naphthoate from chorismate: step 2/7.</text>
</comment>
<comment type="pathway">
    <text evidence="1">Quinol/quinone metabolism; menaquinone biosynthesis.</text>
</comment>
<comment type="subunit">
    <text evidence="1">Homodimer.</text>
</comment>
<comment type="similarity">
    <text evidence="1">Belongs to the TPP enzyme family. MenD subfamily.</text>
</comment>
<reference key="1">
    <citation type="journal article" date="2008" name="J. Bacteriol.">
        <title>The pangenome structure of Escherichia coli: comparative genomic analysis of E. coli commensal and pathogenic isolates.</title>
        <authorList>
            <person name="Rasko D.A."/>
            <person name="Rosovitz M.J."/>
            <person name="Myers G.S.A."/>
            <person name="Mongodin E.F."/>
            <person name="Fricke W.F."/>
            <person name="Gajer P."/>
            <person name="Crabtree J."/>
            <person name="Sebaihia M."/>
            <person name="Thomson N.R."/>
            <person name="Chaudhuri R."/>
            <person name="Henderson I.R."/>
            <person name="Sperandio V."/>
            <person name="Ravel J."/>
        </authorList>
    </citation>
    <scope>NUCLEOTIDE SEQUENCE [LARGE SCALE GENOMIC DNA]</scope>
    <source>
        <strain>HS</strain>
    </source>
</reference>
<gene>
    <name evidence="1" type="primary">menD</name>
    <name type="ordered locus">EcHS_A2410</name>
</gene>
<protein>
    <recommendedName>
        <fullName evidence="1">2-succinyl-5-enolpyruvyl-6-hydroxy-3-cyclohexene-1-carboxylate synthase</fullName>
        <shortName evidence="1">SEPHCHC synthase</shortName>
        <ecNumber evidence="1">2.2.1.9</ecNumber>
    </recommendedName>
    <alternativeName>
        <fullName evidence="1">Menaquinone biosynthesis protein MenD</fullName>
    </alternativeName>
</protein>
<sequence length="556" mass="61367">MSVSAFNRRWAAVILEALTRHGVRHICIAPGSRSTPLTLAAAENSAFIHHTHFDERGLGHLALGLAKVSKQPVAVIVTSGTAVANLYPALIEAGLTGEKLILLTADRPPELIDCGANQAIRQPGMFASHPTHSISLPRPTQDIPARWLVSTIDHALGTLHAGGVHINCPFAEPLYGEMDDTGLSWQQRLGDWWQDDKPWLREAPRLESEKQRDWFFWRQKRGVVVAGRMSAEEGKKVALWAQTLGWPLIGDVLSQTGQPLPCADLWLGNAKATSELQQAQIVVQLGSSLTGKRLLQWQASCEPEEYWIVDDIEGRLDPAHHRGRRLIANIADWLELHPAEKRQPWCVEIPRLAEQAMQAVIARRDAFGEAQLAHRICDYLPEQGQLFVGNSLVVRLIDALSQLPAGYPVYSNRGASGIDGLLSTAAGVQRASGKPTLAIVGDLSALYDLNALALLRQVSAPLVLIVVNNNGGQIFSLLPTPQSERERFYLMPQNVHFEHAAAMFELKYHRPQNWQELETAFADAWRTPTTTVIEMVVNDTDGAQTLQQLLAQVSHL</sequence>
<organism>
    <name type="scientific">Escherichia coli O9:H4 (strain HS)</name>
    <dbReference type="NCBI Taxonomy" id="331112"/>
    <lineage>
        <taxon>Bacteria</taxon>
        <taxon>Pseudomonadati</taxon>
        <taxon>Pseudomonadota</taxon>
        <taxon>Gammaproteobacteria</taxon>
        <taxon>Enterobacterales</taxon>
        <taxon>Enterobacteriaceae</taxon>
        <taxon>Escherichia</taxon>
    </lineage>
</organism>
<keyword id="KW-0460">Magnesium</keyword>
<keyword id="KW-0464">Manganese</keyword>
<keyword id="KW-0474">Menaquinone biosynthesis</keyword>
<keyword id="KW-0479">Metal-binding</keyword>
<keyword id="KW-0786">Thiamine pyrophosphate</keyword>
<keyword id="KW-0808">Transferase</keyword>
<proteinExistence type="inferred from homology"/>
<name>MEND_ECOHS</name>
<dbReference type="EC" id="2.2.1.9" evidence="1"/>
<dbReference type="EMBL" id="CP000802">
    <property type="protein sequence ID" value="ABV06686.1"/>
    <property type="molecule type" value="Genomic_DNA"/>
</dbReference>
<dbReference type="RefSeq" id="WP_001295284.1">
    <property type="nucleotide sequence ID" value="NC_009800.1"/>
</dbReference>
<dbReference type="SMR" id="A8A2D2"/>
<dbReference type="KEGG" id="ecx:EcHS_A2410"/>
<dbReference type="HOGENOM" id="CLU_006051_3_0_6"/>
<dbReference type="UniPathway" id="UPA00079"/>
<dbReference type="UniPathway" id="UPA01057">
    <property type="reaction ID" value="UER00164"/>
</dbReference>
<dbReference type="GO" id="GO:0070204">
    <property type="term" value="F:2-succinyl-5-enolpyruvyl-6-hydroxy-3-cyclohexene-1-carboxylic-acid synthase activity"/>
    <property type="evidence" value="ECO:0007669"/>
    <property type="project" value="UniProtKB-UniRule"/>
</dbReference>
<dbReference type="GO" id="GO:0000287">
    <property type="term" value="F:magnesium ion binding"/>
    <property type="evidence" value="ECO:0007669"/>
    <property type="project" value="UniProtKB-UniRule"/>
</dbReference>
<dbReference type="GO" id="GO:0030145">
    <property type="term" value="F:manganese ion binding"/>
    <property type="evidence" value="ECO:0007669"/>
    <property type="project" value="UniProtKB-UniRule"/>
</dbReference>
<dbReference type="GO" id="GO:0030976">
    <property type="term" value="F:thiamine pyrophosphate binding"/>
    <property type="evidence" value="ECO:0007669"/>
    <property type="project" value="UniProtKB-UniRule"/>
</dbReference>
<dbReference type="GO" id="GO:0009234">
    <property type="term" value="P:menaquinone biosynthetic process"/>
    <property type="evidence" value="ECO:0007669"/>
    <property type="project" value="UniProtKB-UniRule"/>
</dbReference>
<dbReference type="CDD" id="cd07037">
    <property type="entry name" value="TPP_PYR_MenD"/>
    <property type="match status" value="1"/>
</dbReference>
<dbReference type="CDD" id="cd02009">
    <property type="entry name" value="TPP_SHCHC_synthase"/>
    <property type="match status" value="1"/>
</dbReference>
<dbReference type="FunFam" id="3.40.50.1220:FF:000010">
    <property type="entry name" value="2-succinyl-5-enolpyruvyl-6-hydroxy-3-cyclohexene-1-carboxylate synthase"/>
    <property type="match status" value="1"/>
</dbReference>
<dbReference type="FunFam" id="3.40.50.970:FF:000029">
    <property type="entry name" value="2-succinyl-5-enolpyruvyl-6-hydroxy-3-cyclohexene-1-carboxylate synthase"/>
    <property type="match status" value="1"/>
</dbReference>
<dbReference type="FunFam" id="3.40.50.970:FF:000035">
    <property type="entry name" value="2-succinyl-5-enolpyruvyl-6-hydroxy-3-cyclohexene-1-carboxylate synthase"/>
    <property type="match status" value="1"/>
</dbReference>
<dbReference type="Gene3D" id="3.40.50.970">
    <property type="match status" value="2"/>
</dbReference>
<dbReference type="Gene3D" id="3.40.50.1220">
    <property type="entry name" value="TPP-binding domain"/>
    <property type="match status" value="1"/>
</dbReference>
<dbReference type="HAMAP" id="MF_01659">
    <property type="entry name" value="MenD"/>
    <property type="match status" value="1"/>
</dbReference>
<dbReference type="InterPro" id="IPR004433">
    <property type="entry name" value="MenaQ_synth_MenD"/>
</dbReference>
<dbReference type="InterPro" id="IPR032264">
    <property type="entry name" value="MenD_middle"/>
</dbReference>
<dbReference type="InterPro" id="IPR029061">
    <property type="entry name" value="THDP-binding"/>
</dbReference>
<dbReference type="InterPro" id="IPR012001">
    <property type="entry name" value="Thiamin_PyroP_enz_TPP-bd_dom"/>
</dbReference>
<dbReference type="InterPro" id="IPR011766">
    <property type="entry name" value="TPP_enzyme_TPP-bd"/>
</dbReference>
<dbReference type="NCBIfam" id="TIGR00173">
    <property type="entry name" value="menD"/>
    <property type="match status" value="1"/>
</dbReference>
<dbReference type="PANTHER" id="PTHR42916">
    <property type="entry name" value="2-SUCCINYL-5-ENOLPYRUVYL-6-HYDROXY-3-CYCLOHEXENE-1-CARBOXYLATE SYNTHASE"/>
    <property type="match status" value="1"/>
</dbReference>
<dbReference type="PANTHER" id="PTHR42916:SF1">
    <property type="entry name" value="PROTEIN PHYLLO, CHLOROPLASTIC"/>
    <property type="match status" value="1"/>
</dbReference>
<dbReference type="Pfam" id="PF02775">
    <property type="entry name" value="TPP_enzyme_C"/>
    <property type="match status" value="1"/>
</dbReference>
<dbReference type="Pfam" id="PF16582">
    <property type="entry name" value="TPP_enzyme_M_2"/>
    <property type="match status" value="1"/>
</dbReference>
<dbReference type="Pfam" id="PF02776">
    <property type="entry name" value="TPP_enzyme_N"/>
    <property type="match status" value="1"/>
</dbReference>
<dbReference type="PIRSF" id="PIRSF004983">
    <property type="entry name" value="MenD"/>
    <property type="match status" value="1"/>
</dbReference>
<dbReference type="SUPFAM" id="SSF52518">
    <property type="entry name" value="Thiamin diphosphate-binding fold (THDP-binding)"/>
    <property type="match status" value="2"/>
</dbReference>
<feature type="chain" id="PRO_0000341746" description="2-succinyl-5-enolpyruvyl-6-hydroxy-3-cyclohexene-1-carboxylate synthase">
    <location>
        <begin position="1"/>
        <end position="556"/>
    </location>
</feature>
<evidence type="ECO:0000255" key="1">
    <source>
        <dbReference type="HAMAP-Rule" id="MF_01659"/>
    </source>
</evidence>
<accession>A8A2D2</accession>